<protein>
    <recommendedName>
        <fullName>Autophagy-related protein 22-2</fullName>
    </recommendedName>
</protein>
<proteinExistence type="inferred from homology"/>
<feature type="chain" id="PRO_0000318029" description="Autophagy-related protein 22-2">
    <location>
        <begin position="1"/>
        <end position="607"/>
    </location>
</feature>
<feature type="transmembrane region" description="Helical" evidence="2">
    <location>
        <begin position="44"/>
        <end position="64"/>
    </location>
</feature>
<feature type="transmembrane region" description="Helical" evidence="2">
    <location>
        <begin position="111"/>
        <end position="131"/>
    </location>
</feature>
<feature type="transmembrane region" description="Helical" evidence="2">
    <location>
        <begin position="143"/>
        <end position="160"/>
    </location>
</feature>
<feature type="transmembrane region" description="Helical" evidence="2">
    <location>
        <begin position="161"/>
        <end position="178"/>
    </location>
</feature>
<feature type="transmembrane region" description="Helical" evidence="2">
    <location>
        <begin position="277"/>
        <end position="297"/>
    </location>
</feature>
<feature type="transmembrane region" description="Helical" evidence="2">
    <location>
        <begin position="310"/>
        <end position="330"/>
    </location>
</feature>
<feature type="transmembrane region" description="Helical" evidence="2">
    <location>
        <begin position="381"/>
        <end position="401"/>
    </location>
</feature>
<feature type="transmembrane region" description="Helical" evidence="2">
    <location>
        <begin position="415"/>
        <end position="435"/>
    </location>
</feature>
<feature type="transmembrane region" description="Helical" evidence="2">
    <location>
        <begin position="450"/>
        <end position="470"/>
    </location>
</feature>
<feature type="transmembrane region" description="Helical" evidence="2">
    <location>
        <begin position="484"/>
        <end position="504"/>
    </location>
</feature>
<feature type="transmembrane region" description="Helical" evidence="2">
    <location>
        <begin position="521"/>
        <end position="543"/>
    </location>
</feature>
<feature type="transmembrane region" description="Helical" evidence="2">
    <location>
        <begin position="552"/>
        <end position="572"/>
    </location>
</feature>
<feature type="region of interest" description="Disordered" evidence="3">
    <location>
        <begin position="9"/>
        <end position="31"/>
    </location>
</feature>
<feature type="region of interest" description="Disordered" evidence="3">
    <location>
        <begin position="203"/>
        <end position="263"/>
    </location>
</feature>
<feature type="region of interest" description="Disordered" evidence="3">
    <location>
        <begin position="585"/>
        <end position="607"/>
    </location>
</feature>
<feature type="glycosylation site" description="N-linked (GlcNAc...) asparagine" evidence="2">
    <location>
        <position position="88"/>
    </location>
</feature>
<feature type="glycosylation site" description="N-linked (GlcNAc...) asparagine" evidence="2">
    <location>
        <position position="91"/>
    </location>
</feature>
<feature type="glycosylation site" description="N-linked (GlcNAc...) asparagine" evidence="2">
    <location>
        <position position="235"/>
    </location>
</feature>
<organism>
    <name type="scientific">Penicillium rubens (strain ATCC 28089 / DSM 1075 / NRRL 1951 / Wisconsin 54-1255)</name>
    <name type="common">Penicillium chrysogenum</name>
    <dbReference type="NCBI Taxonomy" id="500485"/>
    <lineage>
        <taxon>Eukaryota</taxon>
        <taxon>Fungi</taxon>
        <taxon>Dikarya</taxon>
        <taxon>Ascomycota</taxon>
        <taxon>Pezizomycotina</taxon>
        <taxon>Eurotiomycetes</taxon>
        <taxon>Eurotiomycetidae</taxon>
        <taxon>Eurotiales</taxon>
        <taxon>Aspergillaceae</taxon>
        <taxon>Penicillium</taxon>
        <taxon>Penicillium chrysogenum species complex</taxon>
    </lineage>
</organism>
<sequence length="607" mass="65399">MLSYISAAFQSPSPDEGVQQRPPRYVGEDTTPTSRREILGWYSYGIAAEVFAVCGVGSFLPLTLEQLARERGTLQTSRLPCVGPSAGNSTNATEHGQCVVPVFGLEINTASFAMYTFSLAVLIQALTLISFSALADYENNRKTLLMVFGFAGALASMLFVFIAPPLFVIGSILVVVGVTCLGSSFVVLNSYLPVLVANDPSLQEGKADDGTEMSSFDRDEGDSEGNPWGKDHTDNDSLDGLQPSDQPQSSLEGGMGTKAPLSSSPELQLSTKISSRGIGLGYCAAVFVQIISIIMLLTLSKTKLAKVSATLPMRFVLLLVGIWWGAFTLVTRNLLKTRPGPRLDTVSTKGTGRWRAWLRLVGFAWKSLWETVKVVSKLREVLIFLVAWFLLSDAMATVSGTAILFARTELKLSTPLIGLLSITATLSGMTGAFLWPQVSRYFRLQPSHTIILCIALFEMIPLYGLLAYIPFIKNWGVFGLQQPWEIFPLAIVHGVVSGGLASYCRSFFGLLIPPGSEAAFYALYAATDKGSSFIGPAIVGGIVDATGQIRSGFFFMAILIVLPIPLVWMVNADKGRREGLAMAETLGKSHGGPAEDAQEAEGLLARE</sequence>
<name>AT222_PENRW</name>
<reference key="1">
    <citation type="journal article" date="2007" name="Autophagy">
        <title>ATG genes involved in non-selective autophagy are conserved from yeast to man, but the selective Cvt and pexophagy pathways also require organism-specific genes.</title>
        <authorList>
            <person name="Meijer W.H."/>
            <person name="van der Klei I.J."/>
            <person name="Veenhuis M."/>
            <person name="Kiel J.A.K.W."/>
        </authorList>
    </citation>
    <scope>NUCLEOTIDE SEQUENCE [GENOMIC DNA]</scope>
    <scope>FUNCTION</scope>
</reference>
<reference key="2">
    <citation type="journal article" date="2008" name="Nat. Biotechnol.">
        <title>Genome sequencing and analysis of the filamentous fungus Penicillium chrysogenum.</title>
        <authorList>
            <person name="van den Berg M.A."/>
            <person name="Albang R."/>
            <person name="Albermann K."/>
            <person name="Badger J.H."/>
            <person name="Daran J.-M."/>
            <person name="Driessen A.J.M."/>
            <person name="Garcia-Estrada C."/>
            <person name="Fedorova N.D."/>
            <person name="Harris D.M."/>
            <person name="Heijne W.H.M."/>
            <person name="Joardar V.S."/>
            <person name="Kiel J.A.K.W."/>
            <person name="Kovalchuk A."/>
            <person name="Martin J.F."/>
            <person name="Nierman W.C."/>
            <person name="Nijland J.G."/>
            <person name="Pronk J.T."/>
            <person name="Roubos J.A."/>
            <person name="van der Klei I.J."/>
            <person name="van Peij N.N.M.E."/>
            <person name="Veenhuis M."/>
            <person name="von Doehren H."/>
            <person name="Wagner C."/>
            <person name="Wortman J.R."/>
            <person name="Bovenberg R.A.L."/>
        </authorList>
    </citation>
    <scope>NUCLEOTIDE SEQUENCE [LARGE SCALE GENOMIC DNA]</scope>
    <source>
        <strain>ATCC 28089 / DSM 1075 / NRRL 1951 / Wisconsin 54-1255</strain>
    </source>
</reference>
<comment type="function">
    <text evidence="1 4">Vacuolar effluxer which mediate the efflux of amino acids resulting from autophagic degradation. The release of autophagic amino acids allows the maintenance of protein synthesis and viability during nitrogen starvation (By similarity).</text>
</comment>
<comment type="subcellular location">
    <subcellularLocation>
        <location evidence="1">Vacuole membrane</location>
        <topology evidence="1">Multi-pass membrane protein</topology>
    </subcellularLocation>
    <text evidence="1">Vacuole and punctate structures.</text>
</comment>
<comment type="similarity">
    <text evidence="5">Belongs to the ATG22 family.</text>
</comment>
<evidence type="ECO:0000250" key="1"/>
<evidence type="ECO:0000255" key="2"/>
<evidence type="ECO:0000256" key="3">
    <source>
        <dbReference type="SAM" id="MobiDB-lite"/>
    </source>
</evidence>
<evidence type="ECO:0000269" key="4">
    <source>
    </source>
</evidence>
<evidence type="ECO:0000305" key="5"/>
<accession>A7KAN0</accession>
<accession>B6GXV5</accession>
<keyword id="KW-0029">Amino-acid transport</keyword>
<keyword id="KW-0072">Autophagy</keyword>
<keyword id="KW-0325">Glycoprotein</keyword>
<keyword id="KW-0472">Membrane</keyword>
<keyword id="KW-1185">Reference proteome</keyword>
<keyword id="KW-0812">Transmembrane</keyword>
<keyword id="KW-1133">Transmembrane helix</keyword>
<keyword id="KW-0813">Transport</keyword>
<keyword id="KW-0926">Vacuole</keyword>
<gene>
    <name type="primary">atg22-2</name>
    <name type="synonym">atg22a-2</name>
    <name type="ORF">Pc12g00720</name>
</gene>
<dbReference type="EMBL" id="EF110896">
    <property type="protein sequence ID" value="ABO31317.1"/>
    <property type="molecule type" value="Genomic_DNA"/>
</dbReference>
<dbReference type="EMBL" id="AM920427">
    <property type="protein sequence ID" value="CAP79699.1"/>
    <property type="molecule type" value="Genomic_DNA"/>
</dbReference>
<dbReference type="RefSeq" id="XP_002556974.1">
    <property type="nucleotide sequence ID" value="XM_002556928.1"/>
</dbReference>
<dbReference type="STRING" id="500485.A7KAN0"/>
<dbReference type="GlyCosmos" id="A7KAN0">
    <property type="glycosylation" value="3 sites, No reported glycans"/>
</dbReference>
<dbReference type="GeneID" id="8308774"/>
<dbReference type="KEGG" id="pcs:N7525_002376"/>
<dbReference type="VEuPathDB" id="FungiDB:PCH_Pc12g00720"/>
<dbReference type="eggNOG" id="ENOG502QVD3">
    <property type="taxonomic scope" value="Eukaryota"/>
</dbReference>
<dbReference type="HOGENOM" id="CLU_017518_1_0_1"/>
<dbReference type="OMA" id="QPWEIFP"/>
<dbReference type="OrthoDB" id="192733at2759"/>
<dbReference type="BioCyc" id="PCHR:PC12G00720-MONOMER"/>
<dbReference type="Proteomes" id="UP000000724">
    <property type="component" value="Contig Pc00c12"/>
</dbReference>
<dbReference type="GO" id="GO:0005774">
    <property type="term" value="C:vacuolar membrane"/>
    <property type="evidence" value="ECO:0007669"/>
    <property type="project" value="UniProtKB-SubCell"/>
</dbReference>
<dbReference type="GO" id="GO:0032974">
    <property type="term" value="P:amino acid transmembrane export from vacuole"/>
    <property type="evidence" value="ECO:0007669"/>
    <property type="project" value="InterPro"/>
</dbReference>
<dbReference type="GO" id="GO:0006914">
    <property type="term" value="P:autophagy"/>
    <property type="evidence" value="ECO:0007669"/>
    <property type="project" value="UniProtKB-KW"/>
</dbReference>
<dbReference type="CDD" id="cd17483">
    <property type="entry name" value="MFS_Atg22_like"/>
    <property type="match status" value="1"/>
</dbReference>
<dbReference type="Gene3D" id="1.20.1250.20">
    <property type="entry name" value="MFS general substrate transporter like domains"/>
    <property type="match status" value="1"/>
</dbReference>
<dbReference type="InterPro" id="IPR044738">
    <property type="entry name" value="Atg22"/>
</dbReference>
<dbReference type="InterPro" id="IPR024671">
    <property type="entry name" value="Atg22-like"/>
</dbReference>
<dbReference type="InterPro" id="IPR050495">
    <property type="entry name" value="ATG22/LtaA_families"/>
</dbReference>
<dbReference type="InterPro" id="IPR036259">
    <property type="entry name" value="MFS_trans_sf"/>
</dbReference>
<dbReference type="PANTHER" id="PTHR23519">
    <property type="entry name" value="AUTOPHAGY-RELATED PROTEIN 22"/>
    <property type="match status" value="1"/>
</dbReference>
<dbReference type="PANTHER" id="PTHR23519:SF3">
    <property type="entry name" value="AUTOPHAGY-RELATED PROTEIN 22-2"/>
    <property type="match status" value="1"/>
</dbReference>
<dbReference type="Pfam" id="PF11700">
    <property type="entry name" value="ATG22"/>
    <property type="match status" value="1"/>
</dbReference>
<dbReference type="SUPFAM" id="SSF103473">
    <property type="entry name" value="MFS general substrate transporter"/>
    <property type="match status" value="1"/>
</dbReference>